<organism>
    <name type="scientific">Equus caballus</name>
    <name type="common">Horse</name>
    <dbReference type="NCBI Taxonomy" id="9796"/>
    <lineage>
        <taxon>Eukaryota</taxon>
        <taxon>Metazoa</taxon>
        <taxon>Chordata</taxon>
        <taxon>Craniata</taxon>
        <taxon>Vertebrata</taxon>
        <taxon>Euteleostomi</taxon>
        <taxon>Mammalia</taxon>
        <taxon>Eutheria</taxon>
        <taxon>Laurasiatheria</taxon>
        <taxon>Perissodactyla</taxon>
        <taxon>Equidae</taxon>
        <taxon>Equus</taxon>
    </lineage>
</organism>
<protein>
    <recommendedName>
        <fullName>Pulmonary surfactant-associated protein A</fullName>
        <shortName>PSAP</shortName>
        <shortName>PSP-A</shortName>
        <shortName>SP-A</shortName>
    </recommendedName>
</protein>
<name>SFTPA_HORSE</name>
<keyword id="KW-0106">Calcium</keyword>
<keyword id="KW-0176">Collagen</keyword>
<keyword id="KW-1015">Disulfide bond</keyword>
<keyword id="KW-0272">Extracellular matrix</keyword>
<keyword id="KW-0305">Gaseous exchange</keyword>
<keyword id="KW-0325">Glycoprotein</keyword>
<keyword id="KW-0430">Lectin</keyword>
<keyword id="KW-0479">Metal-binding</keyword>
<keyword id="KW-1185">Reference proteome</keyword>
<keyword id="KW-0964">Secreted</keyword>
<keyword id="KW-0732">Signal</keyword>
<keyword id="KW-0767">Surface film</keyword>
<accession>Q95L88</accession>
<accession>Q9N0G1</accession>
<gene>
    <name type="primary">SFTPA1</name>
</gene>
<sequence>MLLCSLTLTLILLAVSGTKCDVKEFCAACSGVPGIPGSPGLPGRDGRDGVKGDPGPPGPIGPPGGMPGSPGHDGLIGPPGPPGERGDKGEPGERGPPGPPAYPDEELQTTLHDIRHQILQLMGALSLQGSMLAVGEKVFSTNGQVVDFDAIRESCARAGGRIAVPKSLEENAAIASLVTKHNTYAYLGLEEGPTAGDFYYLDGAPVNYTNWYPGEPRGRGKEKCVEMYTDGQWNDRSCLQYRLAICEF</sequence>
<proteinExistence type="evidence at transcript level"/>
<comment type="function">
    <text evidence="2">In presence of calcium ions, it binds to surfactant phospholipids and contributes to lower the surface tension at the air-liquid interface in the alveoli of the mammalian lung and is essential for normal respiration. Enhances the expression of MYO18A/SP-R210 on alveolar macrophages.</text>
</comment>
<comment type="subunit">
    <text evidence="3">Oligomeric complex of 6 set of homotrimers.</text>
</comment>
<comment type="subcellular location">
    <subcellularLocation>
        <location evidence="3">Secreted</location>
    </subcellularLocation>
    <subcellularLocation>
        <location evidence="3">Secreted</location>
        <location evidence="3">Extracellular space</location>
        <location evidence="3">Extracellular matrix</location>
    </subcellularLocation>
    <subcellularLocation>
        <location evidence="3">Secreted</location>
        <location evidence="3">Extracellular space</location>
        <location evidence="3">Surface film</location>
    </subcellularLocation>
</comment>
<comment type="similarity">
    <text evidence="7">Belongs to the SFTPA family.</text>
</comment>
<reference key="1">
    <citation type="submission" date="1998-07" db="EMBL/GenBank/DDBJ databases">
        <title>Molecular cloning of equine pulmonary surfactant proteins.</title>
        <authorList>
            <person name="Hobo S."/>
        </authorList>
    </citation>
    <scope>NUCLEOTIDE SEQUENCE [MRNA]</scope>
    <source>
        <strain>Thoroughbred</strain>
        <tissue>Lung</tissue>
    </source>
</reference>
<reference key="2">
    <citation type="submission" date="2001-07" db="EMBL/GenBank/DDBJ databases">
        <authorList>
            <person name="Weber B.I.L."/>
            <person name="Hospes R."/>
            <person name="Gortner L."/>
        </authorList>
    </citation>
    <scope>NUCLEOTIDE SEQUENCE [MRNA]</scope>
</reference>
<feature type="signal peptide" evidence="4">
    <location>
        <begin position="1"/>
        <end position="20"/>
    </location>
</feature>
<feature type="chain" id="PRO_0000017456" description="Pulmonary surfactant-associated protein A">
    <location>
        <begin position="21"/>
        <end position="248"/>
    </location>
</feature>
<feature type="domain" description="Collagen-like">
    <location>
        <begin position="31"/>
        <end position="100"/>
    </location>
</feature>
<feature type="domain" description="C-type lectin" evidence="5">
    <location>
        <begin position="134"/>
        <end position="247"/>
    </location>
</feature>
<feature type="region of interest" description="Disordered" evidence="6">
    <location>
        <begin position="34"/>
        <end position="105"/>
    </location>
</feature>
<feature type="compositionally biased region" description="Pro residues" evidence="6">
    <location>
        <begin position="54"/>
        <end position="65"/>
    </location>
</feature>
<feature type="compositionally biased region" description="Basic and acidic residues" evidence="6">
    <location>
        <begin position="84"/>
        <end position="93"/>
    </location>
</feature>
<feature type="binding site" evidence="1">
    <location>
        <position position="215"/>
    </location>
    <ligand>
        <name>Ca(2+)</name>
        <dbReference type="ChEBI" id="CHEBI:29108"/>
    </ligand>
</feature>
<feature type="binding site" evidence="1">
    <location>
        <position position="217"/>
    </location>
    <ligand>
        <name>Ca(2+)</name>
        <dbReference type="ChEBI" id="CHEBI:29108"/>
    </ligand>
</feature>
<feature type="binding site" evidence="1">
    <location>
        <position position="234"/>
    </location>
    <ligand>
        <name>Ca(2+)</name>
        <dbReference type="ChEBI" id="CHEBI:29108"/>
    </ligand>
</feature>
<feature type="binding site" evidence="1">
    <location>
        <position position="235"/>
    </location>
    <ligand>
        <name>Ca(2+)</name>
        <dbReference type="ChEBI" id="CHEBI:29108"/>
    </ligand>
</feature>
<feature type="glycosylation site" description="N-linked (GlcNAc...) asparagine" evidence="4">
    <location>
        <position position="207"/>
    </location>
</feature>
<feature type="disulfide bond" description="Interchain" evidence="5">
    <location>
        <position position="26"/>
    </location>
</feature>
<feature type="disulfide bond" evidence="5">
    <location>
        <begin position="155"/>
        <end position="246"/>
    </location>
</feature>
<feature type="disulfide bond" evidence="5">
    <location>
        <begin position="224"/>
        <end position="238"/>
    </location>
</feature>
<feature type="sequence conflict" description="In Ref. 1; BAA97976." evidence="7" ref="1">
    <original>Q</original>
    <variation>L</variation>
    <location>
        <position position="128"/>
    </location>
</feature>
<feature type="sequence conflict" description="In Ref. 1; BAA97976." evidence="7" ref="1">
    <original>M</original>
    <variation>V</variation>
    <location>
        <position position="131"/>
    </location>
</feature>
<evidence type="ECO:0000250" key="1"/>
<evidence type="ECO:0000250" key="2">
    <source>
        <dbReference type="UniProtKB" id="P35242"/>
    </source>
</evidence>
<evidence type="ECO:0000250" key="3">
    <source>
        <dbReference type="UniProtKB" id="Q8IWL2"/>
    </source>
</evidence>
<evidence type="ECO:0000255" key="4"/>
<evidence type="ECO:0000255" key="5">
    <source>
        <dbReference type="PROSITE-ProRule" id="PRU00040"/>
    </source>
</evidence>
<evidence type="ECO:0000256" key="6">
    <source>
        <dbReference type="SAM" id="MobiDB-lite"/>
    </source>
</evidence>
<evidence type="ECO:0000305" key="7"/>
<dbReference type="EMBL" id="AB015963">
    <property type="protein sequence ID" value="BAA97976.1"/>
    <property type="molecule type" value="mRNA"/>
</dbReference>
<dbReference type="EMBL" id="AF400580">
    <property type="protein sequence ID" value="AAL07690.1"/>
    <property type="molecule type" value="Genomic_DNA"/>
</dbReference>
<dbReference type="RefSeq" id="NP_001075281.1">
    <property type="nucleotide sequence ID" value="NM_001081812.2"/>
</dbReference>
<dbReference type="SMR" id="Q95L88"/>
<dbReference type="FunCoup" id="Q95L88">
    <property type="interactions" value="156"/>
</dbReference>
<dbReference type="STRING" id="9796.ENSECAP00000016397"/>
<dbReference type="GlyCosmos" id="Q95L88">
    <property type="glycosylation" value="1 site, No reported glycans"/>
</dbReference>
<dbReference type="PaxDb" id="9796-ENSECAP00000016397"/>
<dbReference type="GeneID" id="100033826"/>
<dbReference type="KEGG" id="ecb:100033826"/>
<dbReference type="CTD" id="653509"/>
<dbReference type="InParanoid" id="Q95L88"/>
<dbReference type="OrthoDB" id="7357196at2759"/>
<dbReference type="Proteomes" id="UP000002281">
    <property type="component" value="Unplaced"/>
</dbReference>
<dbReference type="GO" id="GO:0005581">
    <property type="term" value="C:collagen trimer"/>
    <property type="evidence" value="ECO:0007669"/>
    <property type="project" value="UniProtKB-KW"/>
</dbReference>
<dbReference type="GO" id="GO:0005615">
    <property type="term" value="C:extracellular space"/>
    <property type="evidence" value="ECO:0000318"/>
    <property type="project" value="GO_Central"/>
</dbReference>
<dbReference type="GO" id="GO:0005771">
    <property type="term" value="C:multivesicular body"/>
    <property type="evidence" value="ECO:0000318"/>
    <property type="project" value="GO_Central"/>
</dbReference>
<dbReference type="GO" id="GO:0030246">
    <property type="term" value="F:carbohydrate binding"/>
    <property type="evidence" value="ECO:0007669"/>
    <property type="project" value="UniProtKB-KW"/>
</dbReference>
<dbReference type="GO" id="GO:0046872">
    <property type="term" value="F:metal ion binding"/>
    <property type="evidence" value="ECO:0007669"/>
    <property type="project" value="UniProtKB-KW"/>
</dbReference>
<dbReference type="GO" id="GO:0007585">
    <property type="term" value="P:respiratory gaseous exchange by respiratory system"/>
    <property type="evidence" value="ECO:0007669"/>
    <property type="project" value="UniProtKB-KW"/>
</dbReference>
<dbReference type="CDD" id="cd03591">
    <property type="entry name" value="CLECT_collectin_like"/>
    <property type="match status" value="1"/>
</dbReference>
<dbReference type="FunFam" id="3.10.100.10:FF:000056">
    <property type="entry name" value="Pulmonary surfactant-associated protein A"/>
    <property type="match status" value="1"/>
</dbReference>
<dbReference type="Gene3D" id="3.10.100.10">
    <property type="entry name" value="Mannose-Binding Protein A, subunit A"/>
    <property type="match status" value="1"/>
</dbReference>
<dbReference type="InterPro" id="IPR001304">
    <property type="entry name" value="C-type_lectin-like"/>
</dbReference>
<dbReference type="InterPro" id="IPR016186">
    <property type="entry name" value="C-type_lectin-like/link_sf"/>
</dbReference>
<dbReference type="InterPro" id="IPR018378">
    <property type="entry name" value="C-type_lectin_CS"/>
</dbReference>
<dbReference type="InterPro" id="IPR051077">
    <property type="entry name" value="Ca-dependent_lectin"/>
</dbReference>
<dbReference type="InterPro" id="IPR033990">
    <property type="entry name" value="Collectin_CTLD"/>
</dbReference>
<dbReference type="InterPro" id="IPR016187">
    <property type="entry name" value="CTDL_fold"/>
</dbReference>
<dbReference type="PANTHER" id="PTHR24024">
    <property type="entry name" value="PULMONARY SURFACTANT-ASSOCIATED PROTEIN A"/>
    <property type="match status" value="1"/>
</dbReference>
<dbReference type="PANTHER" id="PTHR24024:SF13">
    <property type="entry name" value="PULMONARY SURFACTANT-ASSOCIATED PROTEIN A1"/>
    <property type="match status" value="1"/>
</dbReference>
<dbReference type="Pfam" id="PF00059">
    <property type="entry name" value="Lectin_C"/>
    <property type="match status" value="1"/>
</dbReference>
<dbReference type="SMART" id="SM00034">
    <property type="entry name" value="CLECT"/>
    <property type="match status" value="1"/>
</dbReference>
<dbReference type="SUPFAM" id="SSF56436">
    <property type="entry name" value="C-type lectin-like"/>
    <property type="match status" value="1"/>
</dbReference>
<dbReference type="SUPFAM" id="SSF57944">
    <property type="entry name" value="Triple coiled coil domain of C-type lectins"/>
    <property type="match status" value="1"/>
</dbReference>
<dbReference type="PROSITE" id="PS00615">
    <property type="entry name" value="C_TYPE_LECTIN_1"/>
    <property type="match status" value="1"/>
</dbReference>
<dbReference type="PROSITE" id="PS50041">
    <property type="entry name" value="C_TYPE_LECTIN_2"/>
    <property type="match status" value="1"/>
</dbReference>